<evidence type="ECO:0000255" key="1">
    <source>
        <dbReference type="HAMAP-Rule" id="MF_00210"/>
    </source>
</evidence>
<evidence type="ECO:0000256" key="2">
    <source>
        <dbReference type="SAM" id="MobiDB-lite"/>
    </source>
</evidence>
<reference key="1">
    <citation type="journal article" date="2006" name="Genome Biol.">
        <title>The genome of Rhizobium leguminosarum has recognizable core and accessory components.</title>
        <authorList>
            <person name="Young J.P.W."/>
            <person name="Crossman L.C."/>
            <person name="Johnston A.W.B."/>
            <person name="Thomson N.R."/>
            <person name="Ghazoui Z.F."/>
            <person name="Hull K.H."/>
            <person name="Wexler M."/>
            <person name="Curson A.R.J."/>
            <person name="Todd J.D."/>
            <person name="Poole P.S."/>
            <person name="Mauchline T.H."/>
            <person name="East A.K."/>
            <person name="Quail M.A."/>
            <person name="Churcher C."/>
            <person name="Arrowsmith C."/>
            <person name="Cherevach I."/>
            <person name="Chillingworth T."/>
            <person name="Clarke K."/>
            <person name="Cronin A."/>
            <person name="Davis P."/>
            <person name="Fraser A."/>
            <person name="Hance Z."/>
            <person name="Hauser H."/>
            <person name="Jagels K."/>
            <person name="Moule S."/>
            <person name="Mungall K."/>
            <person name="Norbertczak H."/>
            <person name="Rabbinowitsch E."/>
            <person name="Sanders M."/>
            <person name="Simmonds M."/>
            <person name="Whitehead S."/>
            <person name="Parkhill J."/>
        </authorList>
    </citation>
    <scope>NUCLEOTIDE SEQUENCE [LARGE SCALE GENOMIC DNA]</scope>
    <source>
        <strain>DSM 114642 / LMG 32736 / 3841</strain>
    </source>
</reference>
<dbReference type="EC" id="2.5.1.19" evidence="1"/>
<dbReference type="EMBL" id="AM236080">
    <property type="protein sequence ID" value="CAK05596.1"/>
    <property type="molecule type" value="Genomic_DNA"/>
</dbReference>
<dbReference type="RefSeq" id="WP_011649931.1">
    <property type="nucleotide sequence ID" value="NC_008380.1"/>
</dbReference>
<dbReference type="SMR" id="Q1MN56"/>
<dbReference type="EnsemblBacteria" id="CAK05596">
    <property type="protein sequence ID" value="CAK05596"/>
    <property type="gene ID" value="RL0108"/>
</dbReference>
<dbReference type="KEGG" id="rle:RL0108"/>
<dbReference type="eggNOG" id="COG0128">
    <property type="taxonomic scope" value="Bacteria"/>
</dbReference>
<dbReference type="HOGENOM" id="CLU_024321_0_1_5"/>
<dbReference type="UniPathway" id="UPA00053">
    <property type="reaction ID" value="UER00089"/>
</dbReference>
<dbReference type="Proteomes" id="UP000006575">
    <property type="component" value="Chromosome"/>
</dbReference>
<dbReference type="GO" id="GO:0005737">
    <property type="term" value="C:cytoplasm"/>
    <property type="evidence" value="ECO:0007669"/>
    <property type="project" value="UniProtKB-SubCell"/>
</dbReference>
<dbReference type="GO" id="GO:0003866">
    <property type="term" value="F:3-phosphoshikimate 1-carboxyvinyltransferase activity"/>
    <property type="evidence" value="ECO:0007669"/>
    <property type="project" value="UniProtKB-UniRule"/>
</dbReference>
<dbReference type="GO" id="GO:0008652">
    <property type="term" value="P:amino acid biosynthetic process"/>
    <property type="evidence" value="ECO:0007669"/>
    <property type="project" value="UniProtKB-KW"/>
</dbReference>
<dbReference type="GO" id="GO:0009073">
    <property type="term" value="P:aromatic amino acid family biosynthetic process"/>
    <property type="evidence" value="ECO:0007669"/>
    <property type="project" value="UniProtKB-KW"/>
</dbReference>
<dbReference type="GO" id="GO:0009423">
    <property type="term" value="P:chorismate biosynthetic process"/>
    <property type="evidence" value="ECO:0007669"/>
    <property type="project" value="UniProtKB-UniRule"/>
</dbReference>
<dbReference type="CDD" id="cd01556">
    <property type="entry name" value="EPSP_synthase"/>
    <property type="match status" value="1"/>
</dbReference>
<dbReference type="FunFam" id="3.65.10.10:FF:000005">
    <property type="entry name" value="3-phosphoshikimate 1-carboxyvinyltransferase"/>
    <property type="match status" value="1"/>
</dbReference>
<dbReference type="FunFam" id="3.65.10.10:FF:000006">
    <property type="entry name" value="3-phosphoshikimate 1-carboxyvinyltransferase"/>
    <property type="match status" value="1"/>
</dbReference>
<dbReference type="Gene3D" id="3.65.10.10">
    <property type="entry name" value="Enolpyruvate transferase domain"/>
    <property type="match status" value="2"/>
</dbReference>
<dbReference type="HAMAP" id="MF_00210">
    <property type="entry name" value="EPSP_synth"/>
    <property type="match status" value="1"/>
</dbReference>
<dbReference type="InterPro" id="IPR001986">
    <property type="entry name" value="Enolpyruvate_Tfrase_dom"/>
</dbReference>
<dbReference type="InterPro" id="IPR036968">
    <property type="entry name" value="Enolpyruvate_Tfrase_sf"/>
</dbReference>
<dbReference type="InterPro" id="IPR006264">
    <property type="entry name" value="EPSP_synthase"/>
</dbReference>
<dbReference type="InterPro" id="IPR023193">
    <property type="entry name" value="EPSP_synthase_CS"/>
</dbReference>
<dbReference type="InterPro" id="IPR013792">
    <property type="entry name" value="RNA3'P_cycl/enolpyr_Trfase_a/b"/>
</dbReference>
<dbReference type="NCBIfam" id="TIGR01356">
    <property type="entry name" value="aroA"/>
    <property type="match status" value="1"/>
</dbReference>
<dbReference type="PANTHER" id="PTHR21090">
    <property type="entry name" value="AROM/DEHYDROQUINATE SYNTHASE"/>
    <property type="match status" value="1"/>
</dbReference>
<dbReference type="PANTHER" id="PTHR21090:SF5">
    <property type="entry name" value="PENTAFUNCTIONAL AROM POLYPEPTIDE"/>
    <property type="match status" value="1"/>
</dbReference>
<dbReference type="Pfam" id="PF00275">
    <property type="entry name" value="EPSP_synthase"/>
    <property type="match status" value="1"/>
</dbReference>
<dbReference type="PIRSF" id="PIRSF000505">
    <property type="entry name" value="EPSPS"/>
    <property type="match status" value="1"/>
</dbReference>
<dbReference type="SUPFAM" id="SSF55205">
    <property type="entry name" value="EPT/RTPC-like"/>
    <property type="match status" value="1"/>
</dbReference>
<dbReference type="PROSITE" id="PS00104">
    <property type="entry name" value="EPSP_SYNTHASE_1"/>
    <property type="match status" value="1"/>
</dbReference>
<dbReference type="PROSITE" id="PS00885">
    <property type="entry name" value="EPSP_SYNTHASE_2"/>
    <property type="match status" value="1"/>
</dbReference>
<accession>Q1MN56</accession>
<feature type="chain" id="PRO_0000325377" description="3-phosphoshikimate 1-carboxyvinyltransferase">
    <location>
        <begin position="1"/>
        <end position="452"/>
    </location>
</feature>
<feature type="region of interest" description="Disordered" evidence="2">
    <location>
        <begin position="1"/>
        <end position="23"/>
    </location>
</feature>
<feature type="active site" description="Proton acceptor" evidence="1">
    <location>
        <position position="326"/>
    </location>
</feature>
<feature type="binding site" evidence="1">
    <location>
        <position position="28"/>
    </location>
    <ligand>
        <name>3-phosphoshikimate</name>
        <dbReference type="ChEBI" id="CHEBI:145989"/>
    </ligand>
</feature>
<feature type="binding site" evidence="1">
    <location>
        <position position="28"/>
    </location>
    <ligand>
        <name>phosphoenolpyruvate</name>
        <dbReference type="ChEBI" id="CHEBI:58702"/>
    </ligand>
</feature>
<feature type="binding site" evidence="1">
    <location>
        <position position="29"/>
    </location>
    <ligand>
        <name>3-phosphoshikimate</name>
        <dbReference type="ChEBI" id="CHEBI:145989"/>
    </ligand>
</feature>
<feature type="binding site" evidence="1">
    <location>
        <position position="33"/>
    </location>
    <ligand>
        <name>3-phosphoshikimate</name>
        <dbReference type="ChEBI" id="CHEBI:145989"/>
    </ligand>
</feature>
<feature type="binding site" evidence="1">
    <location>
        <position position="100"/>
    </location>
    <ligand>
        <name>phosphoenolpyruvate</name>
        <dbReference type="ChEBI" id="CHEBI:58702"/>
    </ligand>
</feature>
<feature type="binding site" evidence="1">
    <location>
        <position position="128"/>
    </location>
    <ligand>
        <name>phosphoenolpyruvate</name>
        <dbReference type="ChEBI" id="CHEBI:58702"/>
    </ligand>
</feature>
<feature type="binding site" evidence="1">
    <location>
        <position position="173"/>
    </location>
    <ligand>
        <name>3-phosphoshikimate</name>
        <dbReference type="ChEBI" id="CHEBI:145989"/>
    </ligand>
</feature>
<feature type="binding site" evidence="1">
    <location>
        <position position="175"/>
    </location>
    <ligand>
        <name>3-phosphoshikimate</name>
        <dbReference type="ChEBI" id="CHEBI:145989"/>
    </ligand>
</feature>
<feature type="binding site" evidence="1">
    <location>
        <position position="175"/>
    </location>
    <ligand>
        <name>phosphoenolpyruvate</name>
        <dbReference type="ChEBI" id="CHEBI:58702"/>
    </ligand>
</feature>
<feature type="binding site" evidence="1">
    <location>
        <position position="326"/>
    </location>
    <ligand>
        <name>3-phosphoshikimate</name>
        <dbReference type="ChEBI" id="CHEBI:145989"/>
    </ligand>
</feature>
<feature type="binding site" evidence="1">
    <location>
        <position position="353"/>
    </location>
    <ligand>
        <name>3-phosphoshikimate</name>
        <dbReference type="ChEBI" id="CHEBI:145989"/>
    </ligand>
</feature>
<feature type="binding site" evidence="1">
    <location>
        <position position="357"/>
    </location>
    <ligand>
        <name>phosphoenolpyruvate</name>
        <dbReference type="ChEBI" id="CHEBI:58702"/>
    </ligand>
</feature>
<feature type="binding site" evidence="1">
    <location>
        <position position="405"/>
    </location>
    <ligand>
        <name>phosphoenolpyruvate</name>
        <dbReference type="ChEBI" id="CHEBI:58702"/>
    </ligand>
</feature>
<gene>
    <name evidence="1" type="primary">aroA</name>
    <name type="ordered locus">RL0108</name>
</gene>
<organism>
    <name type="scientific">Rhizobium johnstonii (strain DSM 114642 / LMG 32736 / 3841)</name>
    <name type="common">Rhizobium leguminosarum bv. viciae</name>
    <dbReference type="NCBI Taxonomy" id="216596"/>
    <lineage>
        <taxon>Bacteria</taxon>
        <taxon>Pseudomonadati</taxon>
        <taxon>Pseudomonadota</taxon>
        <taxon>Alphaproteobacteria</taxon>
        <taxon>Hyphomicrobiales</taxon>
        <taxon>Rhizobiaceae</taxon>
        <taxon>Rhizobium/Agrobacterium group</taxon>
        <taxon>Rhizobium</taxon>
        <taxon>Rhizobium johnstonii</taxon>
    </lineage>
</organism>
<comment type="function">
    <text evidence="1">Catalyzes the transfer of the enolpyruvyl moiety of phosphoenolpyruvate (PEP) to the 5-hydroxyl of shikimate-3-phosphate (S3P) to produce enolpyruvyl shikimate-3-phosphate and inorganic phosphate.</text>
</comment>
<comment type="catalytic activity">
    <reaction evidence="1">
        <text>3-phosphoshikimate + phosphoenolpyruvate = 5-O-(1-carboxyvinyl)-3-phosphoshikimate + phosphate</text>
        <dbReference type="Rhea" id="RHEA:21256"/>
        <dbReference type="ChEBI" id="CHEBI:43474"/>
        <dbReference type="ChEBI" id="CHEBI:57701"/>
        <dbReference type="ChEBI" id="CHEBI:58702"/>
        <dbReference type="ChEBI" id="CHEBI:145989"/>
        <dbReference type="EC" id="2.5.1.19"/>
    </reaction>
    <physiologicalReaction direction="left-to-right" evidence="1">
        <dbReference type="Rhea" id="RHEA:21257"/>
    </physiologicalReaction>
</comment>
<comment type="pathway">
    <text evidence="1">Metabolic intermediate biosynthesis; chorismate biosynthesis; chorismate from D-erythrose 4-phosphate and phosphoenolpyruvate: step 6/7.</text>
</comment>
<comment type="subunit">
    <text evidence="1">Monomer.</text>
</comment>
<comment type="subcellular location">
    <subcellularLocation>
        <location evidence="1">Cytoplasm</location>
    </subcellularLocation>
</comment>
<comment type="similarity">
    <text evidence="1">Belongs to the EPSP synthase family.</text>
</comment>
<proteinExistence type="inferred from homology"/>
<name>AROA_RHIJ3</name>
<protein>
    <recommendedName>
        <fullName evidence="1">3-phosphoshikimate 1-carboxyvinyltransferase</fullName>
        <ecNumber evidence="1">2.5.1.19</ecNumber>
    </recommendedName>
    <alternativeName>
        <fullName evidence="1">5-enolpyruvylshikimate-3-phosphate synthase</fullName>
        <shortName evidence="1">EPSP synthase</shortName>
        <shortName evidence="1">EPSPS</shortName>
    </alternativeName>
</protein>
<sequence length="452" mass="47280">MLNGSASKPATARKSAGLTGSVRIPGDKSISHRSFMIGGLASGETRITGLLEGEDVINTGRAMQAMGARIRKEGAQWVIEGTGNGALLAPDAPLDFGNAGTGVRLTMGLVGTYDFHSTFIGDASLSKRPMGRVLNPLREMGVQVSASEGDRLPVTLRGPGTPSPIRYRVPMASAQVKSAVLLAGLNTPGVTTVIEPVMTRDHTEKMLQGFGAALSVETDGDGVRTIRLEGRGKLAGQVIDVPGDPSSTAFPLVAALIVPGSDITIVNVLMNPTRTGLILTLQEMGADIEVVNARLAGGEDVADLRVRHSELKGVTVPEDRAPSMIDEYPILAVAACFAEGATVMKGLEELRVKESDRLSAVADGLKLNGVDCDEGEDFLIVRGRPDGKGLGNAADGRVSTHLDHRIAMSFLVLGLASEHAVTIDDAAMIATSFPEFMQLMTGLGAKIELVAE</sequence>
<keyword id="KW-0028">Amino-acid biosynthesis</keyword>
<keyword id="KW-0057">Aromatic amino acid biosynthesis</keyword>
<keyword id="KW-0963">Cytoplasm</keyword>
<keyword id="KW-0808">Transferase</keyword>